<proteinExistence type="evidence at protein level"/>
<evidence type="ECO:0000250" key="1">
    <source>
        <dbReference type="UniProtKB" id="Q6PI77"/>
    </source>
</evidence>
<evidence type="ECO:0000256" key="2">
    <source>
        <dbReference type="SAM" id="MobiDB-lite"/>
    </source>
</evidence>
<evidence type="ECO:0000269" key="3">
    <source>
    </source>
</evidence>
<evidence type="ECO:0000305" key="4"/>
<gene>
    <name type="primary">Gprasp3</name>
    <name type="synonym">Bhlhb9</name>
    <name type="synonym">Kiaa1701</name>
</gene>
<sequence>MTGSKNKARAQAKLEKRASAQARAVAEREAANANRGAGKSRDKGKGKAGSKSDAVAEVKAGSKGKVVAETKEGARPESKALVKGTSDFNHRTENKFARSTRKDKPSSDNWFWAGEDSGINSWFWKGEELSNNSVAKCENKPSTSIQARAEEPAPRTSHKSRSGAEEEEEENVIGNWFWEGDDTGFDTDPKPVFKIVKPQPVDEINEKDRPKDWSEVTIWPKAPAVTPAVLGYRSQDSSEARSSSYIVLASNEEETSTACTKNTRSSLQSIPEYPFGSDPCIQTLDEIRQQIKIREENGIKPFACPCKLECYLDSPEFEKLVNILKSTTDPLIHKIAQIAMGIHKVHPFAQEFINEVGVVTLIESLLSFSSPEVSIKKAVITLNSSGDDRYNKVEFHVKHMCKETVSFPLNSPGQQSGLKIIGQLTTESVHHYIVVSYFSELFHLLSQGNRKTRNLVLKVFLNMSENPKAARDMINMKALAALKLIFNQKEAKANLVSAVAIFINIKEHIRKGSIVVVDHLSYNTLTAIFREVKGIIERM</sequence>
<comment type="function">
    <text evidence="3">Survival and differentiation promoting protein that plays a role in the regulation of neurosynaptogenesis. Induces phosphatase PP2A activity which results in APP dephosphorylation and inhibits BACE1-mediated processing of APP.</text>
</comment>
<comment type="subunit">
    <text evidence="3">Homodimer.</text>
</comment>
<comment type="subcellular location">
    <subcellularLocation>
        <location evidence="1">Cytoplasm</location>
    </subcellularLocation>
    <subcellularLocation>
        <location evidence="1">Nucleus</location>
    </subcellularLocation>
    <text evidence="1">Mainly cytoplasmic, and nuclear at lower level.</text>
</comment>
<comment type="similarity">
    <text evidence="4">Belongs to the GPRASP family.</text>
</comment>
<comment type="caution">
    <text evidence="4">Despite its name, no basic helix-loop-helix (bHLH) domain is detected by any prediction tool.</text>
</comment>
<comment type="sequence caution" evidence="4">
    <conflict type="erroneous initiation">
        <sequence resource="EMBL-CDS" id="BAD32514"/>
    </conflict>
    <text>Extended N-terminus.</text>
</comment>
<comment type="sequence caution" evidence="4">
    <conflict type="erroneous termination">
        <sequence resource="EMBL-CDS" id="BAD32514"/>
    </conflict>
    <text>Truncated C-terminus.</text>
</comment>
<accession>Q6PB60</accession>
<accession>Q3U0C1</accession>
<accession>Q69ZD0</accession>
<feature type="chain" id="PRO_0000334664" description="G protein-coupled receptor associated sorting protein 3">
    <location>
        <begin position="1"/>
        <end position="539"/>
    </location>
</feature>
<feature type="region of interest" description="Disordered" evidence="2">
    <location>
        <begin position="1"/>
        <end position="112"/>
    </location>
</feature>
<feature type="region of interest" description="Disordered" evidence="2">
    <location>
        <begin position="134"/>
        <end position="172"/>
    </location>
</feature>
<feature type="compositionally biased region" description="Basic residues" evidence="2">
    <location>
        <begin position="1"/>
        <end position="10"/>
    </location>
</feature>
<feature type="compositionally biased region" description="Basic and acidic residues" evidence="2">
    <location>
        <begin position="66"/>
        <end position="80"/>
    </location>
</feature>
<feature type="compositionally biased region" description="Basic and acidic residues" evidence="2">
    <location>
        <begin position="88"/>
        <end position="106"/>
    </location>
</feature>
<feature type="compositionally biased region" description="Polar residues" evidence="2">
    <location>
        <begin position="134"/>
        <end position="146"/>
    </location>
</feature>
<reference key="1">
    <citation type="journal article" date="2004" name="DNA Res.">
        <title>Prediction of the coding sequences of mouse homologues of KIAA gene: IV. The complete nucleotide sequences of 500 mouse KIAA-homologous cDNAs identified by screening of terminal sequences of cDNA clones randomly sampled from size-fractionated libraries.</title>
        <authorList>
            <person name="Okazaki N."/>
            <person name="Kikuno R."/>
            <person name="Ohara R."/>
            <person name="Inamoto S."/>
            <person name="Koseki H."/>
            <person name="Hiraoka S."/>
            <person name="Saga Y."/>
            <person name="Seino S."/>
            <person name="Nishimura M."/>
            <person name="Kaisho T."/>
            <person name="Hoshino K."/>
            <person name="Kitamura H."/>
            <person name="Nagase T."/>
            <person name="Ohara O."/>
            <person name="Koga H."/>
        </authorList>
    </citation>
    <scope>NUCLEOTIDE SEQUENCE [LARGE SCALE MRNA]</scope>
    <source>
        <tissue>Pancreatic islet</tissue>
    </source>
</reference>
<reference key="2">
    <citation type="journal article" date="2009" name="PLoS Biol.">
        <title>Lineage-specific biology revealed by a finished genome assembly of the mouse.</title>
        <authorList>
            <person name="Church D.M."/>
            <person name="Goodstadt L."/>
            <person name="Hillier L.W."/>
            <person name="Zody M.C."/>
            <person name="Goldstein S."/>
            <person name="She X."/>
            <person name="Bult C.J."/>
            <person name="Agarwala R."/>
            <person name="Cherry J.L."/>
            <person name="DiCuccio M."/>
            <person name="Hlavina W."/>
            <person name="Kapustin Y."/>
            <person name="Meric P."/>
            <person name="Maglott D."/>
            <person name="Birtle Z."/>
            <person name="Marques A.C."/>
            <person name="Graves T."/>
            <person name="Zhou S."/>
            <person name="Teague B."/>
            <person name="Potamousis K."/>
            <person name="Churas C."/>
            <person name="Place M."/>
            <person name="Herschleb J."/>
            <person name="Runnheim R."/>
            <person name="Forrest D."/>
            <person name="Amos-Landgraf J."/>
            <person name="Schwartz D.C."/>
            <person name="Cheng Z."/>
            <person name="Lindblad-Toh K."/>
            <person name="Eichler E.E."/>
            <person name="Ponting C.P."/>
        </authorList>
    </citation>
    <scope>NUCLEOTIDE SEQUENCE [LARGE SCALE GENOMIC DNA]</scope>
    <source>
        <strain>C57BL/6J</strain>
    </source>
</reference>
<reference key="3">
    <citation type="journal article" date="2004" name="Genome Res.">
        <title>The status, quality, and expansion of the NIH full-length cDNA project: the Mammalian Gene Collection (MGC).</title>
        <authorList>
            <consortium name="The MGC Project Team"/>
        </authorList>
    </citation>
    <scope>NUCLEOTIDE SEQUENCE [LARGE SCALE MRNA]</scope>
    <source>
        <strain>C57BL/6J</strain>
        <tissue>Brain</tissue>
    </source>
</reference>
<reference key="4">
    <citation type="journal article" date="2005" name="Science">
        <title>The transcriptional landscape of the mammalian genome.</title>
        <authorList>
            <person name="Carninci P."/>
            <person name="Kasukawa T."/>
            <person name="Katayama S."/>
            <person name="Gough J."/>
            <person name="Frith M.C."/>
            <person name="Maeda N."/>
            <person name="Oyama R."/>
            <person name="Ravasi T."/>
            <person name="Lenhard B."/>
            <person name="Wells C."/>
            <person name="Kodzius R."/>
            <person name="Shimokawa K."/>
            <person name="Bajic V.B."/>
            <person name="Brenner S.E."/>
            <person name="Batalov S."/>
            <person name="Forrest A.R."/>
            <person name="Zavolan M."/>
            <person name="Davis M.J."/>
            <person name="Wilming L.G."/>
            <person name="Aidinis V."/>
            <person name="Allen J.E."/>
            <person name="Ambesi-Impiombato A."/>
            <person name="Apweiler R."/>
            <person name="Aturaliya R.N."/>
            <person name="Bailey T.L."/>
            <person name="Bansal M."/>
            <person name="Baxter L."/>
            <person name="Beisel K.W."/>
            <person name="Bersano T."/>
            <person name="Bono H."/>
            <person name="Chalk A.M."/>
            <person name="Chiu K.P."/>
            <person name="Choudhary V."/>
            <person name="Christoffels A."/>
            <person name="Clutterbuck D.R."/>
            <person name="Crowe M.L."/>
            <person name="Dalla E."/>
            <person name="Dalrymple B.P."/>
            <person name="de Bono B."/>
            <person name="Della Gatta G."/>
            <person name="di Bernardo D."/>
            <person name="Down T."/>
            <person name="Engstrom P."/>
            <person name="Fagiolini M."/>
            <person name="Faulkner G."/>
            <person name="Fletcher C.F."/>
            <person name="Fukushima T."/>
            <person name="Furuno M."/>
            <person name="Futaki S."/>
            <person name="Gariboldi M."/>
            <person name="Georgii-Hemming P."/>
            <person name="Gingeras T.R."/>
            <person name="Gojobori T."/>
            <person name="Green R.E."/>
            <person name="Gustincich S."/>
            <person name="Harbers M."/>
            <person name="Hayashi Y."/>
            <person name="Hensch T.K."/>
            <person name="Hirokawa N."/>
            <person name="Hill D."/>
            <person name="Huminiecki L."/>
            <person name="Iacono M."/>
            <person name="Ikeo K."/>
            <person name="Iwama A."/>
            <person name="Ishikawa T."/>
            <person name="Jakt M."/>
            <person name="Kanapin A."/>
            <person name="Katoh M."/>
            <person name="Kawasawa Y."/>
            <person name="Kelso J."/>
            <person name="Kitamura H."/>
            <person name="Kitano H."/>
            <person name="Kollias G."/>
            <person name="Krishnan S.P."/>
            <person name="Kruger A."/>
            <person name="Kummerfeld S.K."/>
            <person name="Kurochkin I.V."/>
            <person name="Lareau L.F."/>
            <person name="Lazarevic D."/>
            <person name="Lipovich L."/>
            <person name="Liu J."/>
            <person name="Liuni S."/>
            <person name="McWilliam S."/>
            <person name="Madan Babu M."/>
            <person name="Madera M."/>
            <person name="Marchionni L."/>
            <person name="Matsuda H."/>
            <person name="Matsuzawa S."/>
            <person name="Miki H."/>
            <person name="Mignone F."/>
            <person name="Miyake S."/>
            <person name="Morris K."/>
            <person name="Mottagui-Tabar S."/>
            <person name="Mulder N."/>
            <person name="Nakano N."/>
            <person name="Nakauchi H."/>
            <person name="Ng P."/>
            <person name="Nilsson R."/>
            <person name="Nishiguchi S."/>
            <person name="Nishikawa S."/>
            <person name="Nori F."/>
            <person name="Ohara O."/>
            <person name="Okazaki Y."/>
            <person name="Orlando V."/>
            <person name="Pang K.C."/>
            <person name="Pavan W.J."/>
            <person name="Pavesi G."/>
            <person name="Pesole G."/>
            <person name="Petrovsky N."/>
            <person name="Piazza S."/>
            <person name="Reed J."/>
            <person name="Reid J.F."/>
            <person name="Ring B.Z."/>
            <person name="Ringwald M."/>
            <person name="Rost B."/>
            <person name="Ruan Y."/>
            <person name="Salzberg S.L."/>
            <person name="Sandelin A."/>
            <person name="Schneider C."/>
            <person name="Schoenbach C."/>
            <person name="Sekiguchi K."/>
            <person name="Semple C.A."/>
            <person name="Seno S."/>
            <person name="Sessa L."/>
            <person name="Sheng Y."/>
            <person name="Shibata Y."/>
            <person name="Shimada H."/>
            <person name="Shimada K."/>
            <person name="Silva D."/>
            <person name="Sinclair B."/>
            <person name="Sperling S."/>
            <person name="Stupka E."/>
            <person name="Sugiura K."/>
            <person name="Sultana R."/>
            <person name="Takenaka Y."/>
            <person name="Taki K."/>
            <person name="Tammoja K."/>
            <person name="Tan S.L."/>
            <person name="Tang S."/>
            <person name="Taylor M.S."/>
            <person name="Tegner J."/>
            <person name="Teichmann S.A."/>
            <person name="Ueda H.R."/>
            <person name="van Nimwegen E."/>
            <person name="Verardo R."/>
            <person name="Wei C.L."/>
            <person name="Yagi K."/>
            <person name="Yamanishi H."/>
            <person name="Zabarovsky E."/>
            <person name="Zhu S."/>
            <person name="Zimmer A."/>
            <person name="Hide W."/>
            <person name="Bult C."/>
            <person name="Grimmond S.M."/>
            <person name="Teasdale R.D."/>
            <person name="Liu E.T."/>
            <person name="Brusic V."/>
            <person name="Quackenbush J."/>
            <person name="Wahlestedt C."/>
            <person name="Mattick J.S."/>
            <person name="Hume D.A."/>
            <person name="Kai C."/>
            <person name="Sasaki D."/>
            <person name="Tomaru Y."/>
            <person name="Fukuda S."/>
            <person name="Kanamori-Katayama M."/>
            <person name="Suzuki M."/>
            <person name="Aoki J."/>
            <person name="Arakawa T."/>
            <person name="Iida J."/>
            <person name="Imamura K."/>
            <person name="Itoh M."/>
            <person name="Kato T."/>
            <person name="Kawaji H."/>
            <person name="Kawagashira N."/>
            <person name="Kawashima T."/>
            <person name="Kojima M."/>
            <person name="Kondo S."/>
            <person name="Konno H."/>
            <person name="Nakano K."/>
            <person name="Ninomiya N."/>
            <person name="Nishio T."/>
            <person name="Okada M."/>
            <person name="Plessy C."/>
            <person name="Shibata K."/>
            <person name="Shiraki T."/>
            <person name="Suzuki S."/>
            <person name="Tagami M."/>
            <person name="Waki K."/>
            <person name="Watahiki A."/>
            <person name="Okamura-Oho Y."/>
            <person name="Suzuki H."/>
            <person name="Kawai J."/>
            <person name="Hayashizaki Y."/>
        </authorList>
    </citation>
    <scope>NUCLEOTIDE SEQUENCE [LARGE SCALE MRNA] OF 1-220</scope>
    <source>
        <strain>C57BL/6J</strain>
        <strain>NOD</strain>
        <tissue>Spleen</tissue>
    </source>
</reference>
<reference key="5">
    <citation type="journal article" date="2011" name="J. Cell. Mol. Med.">
        <title>P60TRP interferes with the GPCR/secretase pathway to mediate neuronal survival and synaptogenesis.</title>
        <authorList>
            <person name="Mishra M."/>
            <person name="Heese K."/>
        </authorList>
    </citation>
    <scope>FUNCTION</scope>
    <scope>SUBUNIT</scope>
</reference>
<keyword id="KW-0963">Cytoplasm</keyword>
<keyword id="KW-0539">Nucleus</keyword>
<keyword id="KW-1185">Reference proteome</keyword>
<name>GASP3_MOUSE</name>
<protein>
    <recommendedName>
        <fullName>G protein-coupled receptor associated sorting protein 3</fullName>
    </recommendedName>
    <alternativeName>
        <fullName>Protein BHLHb9</fullName>
        <shortName>bHLHb9</shortName>
    </alternativeName>
</protein>
<organism>
    <name type="scientific">Mus musculus</name>
    <name type="common">Mouse</name>
    <dbReference type="NCBI Taxonomy" id="10090"/>
    <lineage>
        <taxon>Eukaryota</taxon>
        <taxon>Metazoa</taxon>
        <taxon>Chordata</taxon>
        <taxon>Craniata</taxon>
        <taxon>Vertebrata</taxon>
        <taxon>Euteleostomi</taxon>
        <taxon>Mammalia</taxon>
        <taxon>Eutheria</taxon>
        <taxon>Euarchontoglires</taxon>
        <taxon>Glires</taxon>
        <taxon>Rodentia</taxon>
        <taxon>Myomorpha</taxon>
        <taxon>Muroidea</taxon>
        <taxon>Muridae</taxon>
        <taxon>Murinae</taxon>
        <taxon>Mus</taxon>
        <taxon>Mus</taxon>
    </lineage>
</organism>
<dbReference type="EMBL" id="AK173236">
    <property type="protein sequence ID" value="BAD32514.1"/>
    <property type="status" value="ALT_SEQ"/>
    <property type="molecule type" value="mRNA"/>
</dbReference>
<dbReference type="EMBL" id="AL683822">
    <property type="status" value="NOT_ANNOTATED_CDS"/>
    <property type="molecule type" value="Genomic_DNA"/>
</dbReference>
<dbReference type="EMBL" id="BC059871">
    <property type="protein sequence ID" value="AAH59871.1"/>
    <property type="molecule type" value="mRNA"/>
</dbReference>
<dbReference type="EMBL" id="AK143861">
    <property type="protein sequence ID" value="BAE25572.1"/>
    <property type="molecule type" value="mRNA"/>
</dbReference>
<dbReference type="EMBL" id="AK157023">
    <property type="protein sequence ID" value="BAE33934.1"/>
    <property type="molecule type" value="mRNA"/>
</dbReference>
<dbReference type="CCDS" id="CCDS30410.1"/>
<dbReference type="RefSeq" id="NP_001091692.1">
    <property type="nucleotide sequence ID" value="NM_001098222.1"/>
</dbReference>
<dbReference type="RefSeq" id="NP_937804.1">
    <property type="nucleotide sequence ID" value="NM_198161.2"/>
</dbReference>
<dbReference type="RefSeq" id="XP_006528670.1">
    <property type="nucleotide sequence ID" value="XM_006528607.2"/>
</dbReference>
<dbReference type="RefSeq" id="XP_006528671.1">
    <property type="nucleotide sequence ID" value="XM_006528608.2"/>
</dbReference>
<dbReference type="RefSeq" id="XP_011246062.1">
    <property type="nucleotide sequence ID" value="XM_011247760.1"/>
</dbReference>
<dbReference type="SMR" id="Q6PB60"/>
<dbReference type="BioGRID" id="213932">
    <property type="interactions" value="1"/>
</dbReference>
<dbReference type="FunCoup" id="Q6PB60">
    <property type="interactions" value="774"/>
</dbReference>
<dbReference type="STRING" id="10090.ENSMUSP00000068067"/>
<dbReference type="GlyGen" id="Q6PB60">
    <property type="glycosylation" value="1 site"/>
</dbReference>
<dbReference type="iPTMnet" id="Q6PB60"/>
<dbReference type="PhosphoSitePlus" id="Q6PB60"/>
<dbReference type="jPOST" id="Q6PB60"/>
<dbReference type="PaxDb" id="10090-ENSMUSP00000068067"/>
<dbReference type="ProteomicsDB" id="273608"/>
<dbReference type="Pumba" id="Q6PB60"/>
<dbReference type="DNASU" id="70237"/>
<dbReference type="Ensembl" id="ENSMUST00000068755.14">
    <property type="protein sequence ID" value="ENSMUSP00000068067.8"/>
    <property type="gene ID" value="ENSMUSG00000072964.15"/>
</dbReference>
<dbReference type="Ensembl" id="ENSMUST00000180025.8">
    <property type="protein sequence ID" value="ENSMUSP00000137213.2"/>
    <property type="gene ID" value="ENSMUSG00000072964.15"/>
</dbReference>
<dbReference type="GeneID" id="70237"/>
<dbReference type="KEGG" id="mmu:70237"/>
<dbReference type="UCSC" id="uc009uhv.1">
    <property type="organism name" value="mouse"/>
</dbReference>
<dbReference type="AGR" id="MGI:1917487"/>
<dbReference type="CTD" id="70237"/>
<dbReference type="MGI" id="MGI:1917487">
    <property type="gene designation" value="Bhlhb9"/>
</dbReference>
<dbReference type="VEuPathDB" id="HostDB:ENSMUSG00000072964"/>
<dbReference type="eggNOG" id="ENOG502RU0K">
    <property type="taxonomic scope" value="Eukaryota"/>
</dbReference>
<dbReference type="GeneTree" id="ENSGT00940000161990"/>
<dbReference type="HOGENOM" id="CLU_036908_0_0_1"/>
<dbReference type="InParanoid" id="Q6PB60"/>
<dbReference type="OMA" id="TWFWAGE"/>
<dbReference type="OrthoDB" id="9524277at2759"/>
<dbReference type="PhylomeDB" id="Q6PB60"/>
<dbReference type="TreeFam" id="TF335652"/>
<dbReference type="BioGRID-ORCS" id="70237">
    <property type="hits" value="2 hits in 78 CRISPR screens"/>
</dbReference>
<dbReference type="ChiTaRS" id="Bhlhb9">
    <property type="organism name" value="mouse"/>
</dbReference>
<dbReference type="PRO" id="PR:Q6PB60"/>
<dbReference type="Proteomes" id="UP000000589">
    <property type="component" value="Chromosome X"/>
</dbReference>
<dbReference type="RNAct" id="Q6PB60">
    <property type="molecule type" value="protein"/>
</dbReference>
<dbReference type="Bgee" id="ENSMUSG00000072964">
    <property type="expression patterns" value="Expressed in manus and 257 other cell types or tissues"/>
</dbReference>
<dbReference type="ExpressionAtlas" id="Q6PB60">
    <property type="expression patterns" value="baseline and differential"/>
</dbReference>
<dbReference type="GO" id="GO:0005737">
    <property type="term" value="C:cytoplasm"/>
    <property type="evidence" value="ECO:0007669"/>
    <property type="project" value="UniProtKB-SubCell"/>
</dbReference>
<dbReference type="GO" id="GO:0005634">
    <property type="term" value="C:nucleus"/>
    <property type="evidence" value="ECO:0007669"/>
    <property type="project" value="UniProtKB-SubCell"/>
</dbReference>
<dbReference type="GO" id="GO:0042803">
    <property type="term" value="F:protein homodimerization activity"/>
    <property type="evidence" value="ECO:0000314"/>
    <property type="project" value="UniProtKB"/>
</dbReference>
<dbReference type="GO" id="GO:0007611">
    <property type="term" value="P:learning or memory"/>
    <property type="evidence" value="ECO:0000314"/>
    <property type="project" value="UniProtKB"/>
</dbReference>
<dbReference type="GO" id="GO:0043524">
    <property type="term" value="P:negative regulation of neuron apoptotic process"/>
    <property type="evidence" value="ECO:0000314"/>
    <property type="project" value="UniProtKB"/>
</dbReference>
<dbReference type="GO" id="GO:0061003">
    <property type="term" value="P:positive regulation of dendritic spine morphogenesis"/>
    <property type="evidence" value="ECO:0000314"/>
    <property type="project" value="UniProtKB"/>
</dbReference>
<dbReference type="GO" id="GO:0050769">
    <property type="term" value="P:positive regulation of neurogenesis"/>
    <property type="evidence" value="ECO:0000314"/>
    <property type="project" value="UniProtKB"/>
</dbReference>
<dbReference type="GO" id="GO:0051965">
    <property type="term" value="P:positive regulation of synapse assembly"/>
    <property type="evidence" value="ECO:0000314"/>
    <property type="project" value="UniProtKB"/>
</dbReference>
<dbReference type="Gene3D" id="1.25.10.10">
    <property type="entry name" value="Leucine-rich Repeat Variant"/>
    <property type="match status" value="1"/>
</dbReference>
<dbReference type="InterPro" id="IPR011989">
    <property type="entry name" value="ARM-like"/>
</dbReference>
<dbReference type="InterPro" id="IPR006911">
    <property type="entry name" value="ARM-rpt_dom"/>
</dbReference>
<dbReference type="InterPro" id="IPR016024">
    <property type="entry name" value="ARM-type_fold"/>
</dbReference>
<dbReference type="InterPro" id="IPR043374">
    <property type="entry name" value="GASP1-3"/>
</dbReference>
<dbReference type="PANTHER" id="PTHR46414:SF2">
    <property type="entry name" value="G PROTEIN-COUPLED RECEPTOR ASSOCIATED SORTING PROTEIN 3"/>
    <property type="match status" value="1"/>
</dbReference>
<dbReference type="PANTHER" id="PTHR46414">
    <property type="entry name" value="PROTEIN BHLHB9-RELATED"/>
    <property type="match status" value="1"/>
</dbReference>
<dbReference type="Pfam" id="PF04826">
    <property type="entry name" value="Arm_2"/>
    <property type="match status" value="1"/>
</dbReference>
<dbReference type="SUPFAM" id="SSF48371">
    <property type="entry name" value="ARM repeat"/>
    <property type="match status" value="1"/>
</dbReference>